<gene>
    <name evidence="2" type="primary">rpmI</name>
    <name type="ordered locus">STY1776</name>
    <name type="ordered locus">t1215</name>
</gene>
<organism>
    <name type="scientific">Salmonella typhi</name>
    <dbReference type="NCBI Taxonomy" id="90370"/>
    <lineage>
        <taxon>Bacteria</taxon>
        <taxon>Pseudomonadati</taxon>
        <taxon>Pseudomonadota</taxon>
        <taxon>Gammaproteobacteria</taxon>
        <taxon>Enterobacterales</taxon>
        <taxon>Enterobacteriaceae</taxon>
        <taxon>Salmonella</taxon>
    </lineage>
</organism>
<name>RL35_SALTI</name>
<accession>P0A7Q4</accession>
<accession>P07085</accession>
<accession>P78275</accession>
<comment type="similarity">
    <text evidence="2">Belongs to the bacterial ribosomal protein bL35 family.</text>
</comment>
<keyword id="KW-0687">Ribonucleoprotein</keyword>
<keyword id="KW-0689">Ribosomal protein</keyword>
<sequence>MPKIKTVRGAAKRFKKTGKGGFKHKHANLRHILTKKATKRKRHLRPKAMVSKGDLGLVIACLPYA</sequence>
<dbReference type="EMBL" id="AL513382">
    <property type="protein sequence ID" value="CAD02018.1"/>
    <property type="molecule type" value="Genomic_DNA"/>
</dbReference>
<dbReference type="EMBL" id="AE014613">
    <property type="protein sequence ID" value="AAO68870.1"/>
    <property type="molecule type" value="Genomic_DNA"/>
</dbReference>
<dbReference type="RefSeq" id="NP_456177.1">
    <property type="nucleotide sequence ID" value="NC_003198.1"/>
</dbReference>
<dbReference type="RefSeq" id="WP_001124225.1">
    <property type="nucleotide sequence ID" value="NZ_WSUR01000011.1"/>
</dbReference>
<dbReference type="SMR" id="P0A7Q4"/>
<dbReference type="STRING" id="220341.gene:17585710"/>
<dbReference type="GeneID" id="97601348"/>
<dbReference type="KEGG" id="stt:t1215"/>
<dbReference type="KEGG" id="sty:STY1776"/>
<dbReference type="PATRIC" id="fig|220341.7.peg.1787"/>
<dbReference type="eggNOG" id="COG0291">
    <property type="taxonomic scope" value="Bacteria"/>
</dbReference>
<dbReference type="HOGENOM" id="CLU_169643_1_1_6"/>
<dbReference type="OMA" id="PKIKTHR"/>
<dbReference type="OrthoDB" id="47476at2"/>
<dbReference type="Proteomes" id="UP000000541">
    <property type="component" value="Chromosome"/>
</dbReference>
<dbReference type="Proteomes" id="UP000002670">
    <property type="component" value="Chromosome"/>
</dbReference>
<dbReference type="GO" id="GO:0022625">
    <property type="term" value="C:cytosolic large ribosomal subunit"/>
    <property type="evidence" value="ECO:0007669"/>
    <property type="project" value="TreeGrafter"/>
</dbReference>
<dbReference type="GO" id="GO:0003735">
    <property type="term" value="F:structural constituent of ribosome"/>
    <property type="evidence" value="ECO:0007669"/>
    <property type="project" value="InterPro"/>
</dbReference>
<dbReference type="GO" id="GO:0006412">
    <property type="term" value="P:translation"/>
    <property type="evidence" value="ECO:0007669"/>
    <property type="project" value="UniProtKB-UniRule"/>
</dbReference>
<dbReference type="FunFam" id="4.10.410.60:FF:000001">
    <property type="entry name" value="50S ribosomal protein L35"/>
    <property type="match status" value="1"/>
</dbReference>
<dbReference type="Gene3D" id="4.10.410.60">
    <property type="match status" value="1"/>
</dbReference>
<dbReference type="HAMAP" id="MF_00514">
    <property type="entry name" value="Ribosomal_bL35"/>
    <property type="match status" value="1"/>
</dbReference>
<dbReference type="InterPro" id="IPR001706">
    <property type="entry name" value="Ribosomal_bL35"/>
</dbReference>
<dbReference type="InterPro" id="IPR021137">
    <property type="entry name" value="Ribosomal_bL35-like"/>
</dbReference>
<dbReference type="InterPro" id="IPR018265">
    <property type="entry name" value="Ribosomal_bL35_CS"/>
</dbReference>
<dbReference type="InterPro" id="IPR037229">
    <property type="entry name" value="Ribosomal_bL35_sf"/>
</dbReference>
<dbReference type="NCBIfam" id="TIGR00001">
    <property type="entry name" value="rpmI_bact"/>
    <property type="match status" value="1"/>
</dbReference>
<dbReference type="PANTHER" id="PTHR33343">
    <property type="entry name" value="54S RIBOSOMAL PROTEIN BL35M"/>
    <property type="match status" value="1"/>
</dbReference>
<dbReference type="PANTHER" id="PTHR33343:SF1">
    <property type="entry name" value="LARGE RIBOSOMAL SUBUNIT PROTEIN BL35M"/>
    <property type="match status" value="1"/>
</dbReference>
<dbReference type="Pfam" id="PF01632">
    <property type="entry name" value="Ribosomal_L35p"/>
    <property type="match status" value="1"/>
</dbReference>
<dbReference type="PRINTS" id="PR00064">
    <property type="entry name" value="RIBOSOMALL35"/>
</dbReference>
<dbReference type="SUPFAM" id="SSF143034">
    <property type="entry name" value="L35p-like"/>
    <property type="match status" value="1"/>
</dbReference>
<dbReference type="PROSITE" id="PS00936">
    <property type="entry name" value="RIBOSOMAL_L35"/>
    <property type="match status" value="1"/>
</dbReference>
<evidence type="ECO:0000250" key="1"/>
<evidence type="ECO:0000255" key="2">
    <source>
        <dbReference type="HAMAP-Rule" id="MF_00514"/>
    </source>
</evidence>
<evidence type="ECO:0000256" key="3">
    <source>
        <dbReference type="SAM" id="MobiDB-lite"/>
    </source>
</evidence>
<evidence type="ECO:0000305" key="4"/>
<reference key="1">
    <citation type="journal article" date="2001" name="Nature">
        <title>Complete genome sequence of a multiple drug resistant Salmonella enterica serovar Typhi CT18.</title>
        <authorList>
            <person name="Parkhill J."/>
            <person name="Dougan G."/>
            <person name="James K.D."/>
            <person name="Thomson N.R."/>
            <person name="Pickard D."/>
            <person name="Wain J."/>
            <person name="Churcher C.M."/>
            <person name="Mungall K.L."/>
            <person name="Bentley S.D."/>
            <person name="Holden M.T.G."/>
            <person name="Sebaihia M."/>
            <person name="Baker S."/>
            <person name="Basham D."/>
            <person name="Brooks K."/>
            <person name="Chillingworth T."/>
            <person name="Connerton P."/>
            <person name="Cronin A."/>
            <person name="Davis P."/>
            <person name="Davies R.M."/>
            <person name="Dowd L."/>
            <person name="White N."/>
            <person name="Farrar J."/>
            <person name="Feltwell T."/>
            <person name="Hamlin N."/>
            <person name="Haque A."/>
            <person name="Hien T.T."/>
            <person name="Holroyd S."/>
            <person name="Jagels K."/>
            <person name="Krogh A."/>
            <person name="Larsen T.S."/>
            <person name="Leather S."/>
            <person name="Moule S."/>
            <person name="O'Gaora P."/>
            <person name="Parry C."/>
            <person name="Quail M.A."/>
            <person name="Rutherford K.M."/>
            <person name="Simmonds M."/>
            <person name="Skelton J."/>
            <person name="Stevens K."/>
            <person name="Whitehead S."/>
            <person name="Barrell B.G."/>
        </authorList>
    </citation>
    <scope>NUCLEOTIDE SEQUENCE [LARGE SCALE GENOMIC DNA]</scope>
    <source>
        <strain>CT18</strain>
    </source>
</reference>
<reference key="2">
    <citation type="journal article" date="2003" name="J. Bacteriol.">
        <title>Comparative genomics of Salmonella enterica serovar Typhi strains Ty2 and CT18.</title>
        <authorList>
            <person name="Deng W."/>
            <person name="Liou S.-R."/>
            <person name="Plunkett G. III"/>
            <person name="Mayhew G.F."/>
            <person name="Rose D.J."/>
            <person name="Burland V."/>
            <person name="Kodoyianni V."/>
            <person name="Schwartz D.C."/>
            <person name="Blattner F.R."/>
        </authorList>
    </citation>
    <scope>NUCLEOTIDE SEQUENCE [LARGE SCALE GENOMIC DNA]</scope>
    <source>
        <strain>ATCC 700931 / Ty2</strain>
    </source>
</reference>
<protein>
    <recommendedName>
        <fullName evidence="2">Large ribosomal subunit protein bL35</fullName>
    </recommendedName>
    <alternativeName>
        <fullName evidence="4">50S ribosomal protein L35</fullName>
    </alternativeName>
</protein>
<feature type="initiator methionine" description="Removed" evidence="1">
    <location>
        <position position="1"/>
    </location>
</feature>
<feature type="chain" id="PRO_0000177413" description="Large ribosomal subunit protein bL35">
    <location>
        <begin position="2"/>
        <end position="65"/>
    </location>
</feature>
<feature type="region of interest" description="Disordered" evidence="3">
    <location>
        <begin position="1"/>
        <end position="22"/>
    </location>
</feature>
<feature type="compositionally biased region" description="Basic residues" evidence="3">
    <location>
        <begin position="10"/>
        <end position="22"/>
    </location>
</feature>
<proteinExistence type="inferred from homology"/>